<protein>
    <recommendedName>
        <fullName evidence="1">Phenylalanine--tRNA ligase alpha subunit</fullName>
        <ecNumber evidence="1">6.1.1.20</ecNumber>
    </recommendedName>
    <alternativeName>
        <fullName evidence="1">Phenylalanyl-tRNA synthetase alpha subunit</fullName>
        <shortName evidence="1">PheRS</shortName>
    </alternativeName>
</protein>
<organism>
    <name type="scientific">Prosthecochloris aestuarii (strain DSM 271 / SK 413)</name>
    <dbReference type="NCBI Taxonomy" id="290512"/>
    <lineage>
        <taxon>Bacteria</taxon>
        <taxon>Pseudomonadati</taxon>
        <taxon>Chlorobiota</taxon>
        <taxon>Chlorobiia</taxon>
        <taxon>Chlorobiales</taxon>
        <taxon>Chlorobiaceae</taxon>
        <taxon>Prosthecochloris</taxon>
    </lineage>
</organism>
<sequence length="343" mass="38949">MKHSIDSLQKEIESFAITSNETLEEFKLTYLVRKGSIANLFKQLKDVSPDERRAVGQLLNTLKTTAEKKYEDAKDTLASSAASEKNNIIDLTLPGRTHFLGSEHPVQKVLGDMKQIFTAMGFAIETGPELECGVYNFDKLNFPPDHPARDMQDTFFIKLDEKDGNDVLLRTHTSPVQIRVMLDQRPPIRVICPGKVYRNEAISSRSYCVFHQLEGLYIDKNVSFADLKATIYSFAKQMFGQDVQLRFRPSFFPFTEPSAEVDVTCYLCNGKGCKVCKQSGWLEILGCGMVHPNVLCQCGIDPEEYSGYAFGMGVDRTALLRYKIDDIRLLFENDIRMLDQFMQ</sequence>
<reference key="1">
    <citation type="submission" date="2008-06" db="EMBL/GenBank/DDBJ databases">
        <title>Complete sequence of chromosome of Prosthecochloris aestuarii DSM 271.</title>
        <authorList>
            <consortium name="US DOE Joint Genome Institute"/>
            <person name="Lucas S."/>
            <person name="Copeland A."/>
            <person name="Lapidus A."/>
            <person name="Glavina del Rio T."/>
            <person name="Dalin E."/>
            <person name="Tice H."/>
            <person name="Bruce D."/>
            <person name="Goodwin L."/>
            <person name="Pitluck S."/>
            <person name="Schmutz J."/>
            <person name="Larimer F."/>
            <person name="Land M."/>
            <person name="Hauser L."/>
            <person name="Kyrpides N."/>
            <person name="Anderson I."/>
            <person name="Liu Z."/>
            <person name="Li T."/>
            <person name="Zhao F."/>
            <person name="Overmann J."/>
            <person name="Bryant D.A."/>
            <person name="Richardson P."/>
        </authorList>
    </citation>
    <scope>NUCLEOTIDE SEQUENCE [LARGE SCALE GENOMIC DNA]</scope>
    <source>
        <strain>DSM 271 / SK 413</strain>
    </source>
</reference>
<proteinExistence type="inferred from homology"/>
<feature type="chain" id="PRO_1000114900" description="Phenylalanine--tRNA ligase alpha subunit">
    <location>
        <begin position="1"/>
        <end position="343"/>
    </location>
</feature>
<feature type="binding site" evidence="1">
    <location>
        <position position="256"/>
    </location>
    <ligand>
        <name>Mg(2+)</name>
        <dbReference type="ChEBI" id="CHEBI:18420"/>
        <note>shared with beta subunit</note>
    </ligand>
</feature>
<comment type="catalytic activity">
    <reaction evidence="1">
        <text>tRNA(Phe) + L-phenylalanine + ATP = L-phenylalanyl-tRNA(Phe) + AMP + diphosphate + H(+)</text>
        <dbReference type="Rhea" id="RHEA:19413"/>
        <dbReference type="Rhea" id="RHEA-COMP:9668"/>
        <dbReference type="Rhea" id="RHEA-COMP:9699"/>
        <dbReference type="ChEBI" id="CHEBI:15378"/>
        <dbReference type="ChEBI" id="CHEBI:30616"/>
        <dbReference type="ChEBI" id="CHEBI:33019"/>
        <dbReference type="ChEBI" id="CHEBI:58095"/>
        <dbReference type="ChEBI" id="CHEBI:78442"/>
        <dbReference type="ChEBI" id="CHEBI:78531"/>
        <dbReference type="ChEBI" id="CHEBI:456215"/>
        <dbReference type="EC" id="6.1.1.20"/>
    </reaction>
</comment>
<comment type="cofactor">
    <cofactor evidence="1">
        <name>Mg(2+)</name>
        <dbReference type="ChEBI" id="CHEBI:18420"/>
    </cofactor>
    <text evidence="1">Binds 2 magnesium ions per tetramer.</text>
</comment>
<comment type="subunit">
    <text evidence="1">Tetramer of two alpha and two beta subunits.</text>
</comment>
<comment type="subcellular location">
    <subcellularLocation>
        <location evidence="1">Cytoplasm</location>
    </subcellularLocation>
</comment>
<comment type="similarity">
    <text evidence="1">Belongs to the class-II aminoacyl-tRNA synthetase family. Phe-tRNA synthetase alpha subunit type 1 subfamily.</text>
</comment>
<accession>B4S3C8</accession>
<gene>
    <name evidence="1" type="primary">pheS</name>
    <name type="ordered locus">Paes_0163</name>
</gene>
<name>SYFA_PROA2</name>
<dbReference type="EC" id="6.1.1.20" evidence="1"/>
<dbReference type="EMBL" id="CP001108">
    <property type="protein sequence ID" value="ACF45222.1"/>
    <property type="molecule type" value="Genomic_DNA"/>
</dbReference>
<dbReference type="RefSeq" id="WP_012504759.1">
    <property type="nucleotide sequence ID" value="NC_011059.1"/>
</dbReference>
<dbReference type="SMR" id="B4S3C8"/>
<dbReference type="STRING" id="290512.Paes_0163"/>
<dbReference type="KEGG" id="paa:Paes_0163"/>
<dbReference type="eggNOG" id="COG0016">
    <property type="taxonomic scope" value="Bacteria"/>
</dbReference>
<dbReference type="HOGENOM" id="CLU_025086_0_1_10"/>
<dbReference type="Proteomes" id="UP000002725">
    <property type="component" value="Chromosome"/>
</dbReference>
<dbReference type="GO" id="GO:0005737">
    <property type="term" value="C:cytoplasm"/>
    <property type="evidence" value="ECO:0007669"/>
    <property type="project" value="UniProtKB-SubCell"/>
</dbReference>
<dbReference type="GO" id="GO:0005524">
    <property type="term" value="F:ATP binding"/>
    <property type="evidence" value="ECO:0007669"/>
    <property type="project" value="UniProtKB-UniRule"/>
</dbReference>
<dbReference type="GO" id="GO:0000287">
    <property type="term" value="F:magnesium ion binding"/>
    <property type="evidence" value="ECO:0007669"/>
    <property type="project" value="UniProtKB-UniRule"/>
</dbReference>
<dbReference type="GO" id="GO:0004826">
    <property type="term" value="F:phenylalanine-tRNA ligase activity"/>
    <property type="evidence" value="ECO:0007669"/>
    <property type="project" value="UniProtKB-UniRule"/>
</dbReference>
<dbReference type="GO" id="GO:0000049">
    <property type="term" value="F:tRNA binding"/>
    <property type="evidence" value="ECO:0007669"/>
    <property type="project" value="InterPro"/>
</dbReference>
<dbReference type="GO" id="GO:0006432">
    <property type="term" value="P:phenylalanyl-tRNA aminoacylation"/>
    <property type="evidence" value="ECO:0007669"/>
    <property type="project" value="UniProtKB-UniRule"/>
</dbReference>
<dbReference type="CDD" id="cd00496">
    <property type="entry name" value="PheRS_alpha_core"/>
    <property type="match status" value="1"/>
</dbReference>
<dbReference type="FunFam" id="3.30.930.10:FF:000003">
    <property type="entry name" value="Phenylalanine--tRNA ligase alpha subunit"/>
    <property type="match status" value="1"/>
</dbReference>
<dbReference type="Gene3D" id="3.30.930.10">
    <property type="entry name" value="Bira Bifunctional Protein, Domain 2"/>
    <property type="match status" value="1"/>
</dbReference>
<dbReference type="HAMAP" id="MF_00281">
    <property type="entry name" value="Phe_tRNA_synth_alpha1"/>
    <property type="match status" value="1"/>
</dbReference>
<dbReference type="InterPro" id="IPR006195">
    <property type="entry name" value="aa-tRNA-synth_II"/>
</dbReference>
<dbReference type="InterPro" id="IPR045864">
    <property type="entry name" value="aa-tRNA-synth_II/BPL/LPL"/>
</dbReference>
<dbReference type="InterPro" id="IPR004529">
    <property type="entry name" value="Phe-tRNA-synth_IIc_asu"/>
</dbReference>
<dbReference type="InterPro" id="IPR004188">
    <property type="entry name" value="Phe-tRNA_ligase_II_N"/>
</dbReference>
<dbReference type="InterPro" id="IPR022911">
    <property type="entry name" value="Phe_tRNA_ligase_alpha1_bac"/>
</dbReference>
<dbReference type="InterPro" id="IPR002319">
    <property type="entry name" value="Phenylalanyl-tRNA_Synthase"/>
</dbReference>
<dbReference type="InterPro" id="IPR010978">
    <property type="entry name" value="tRNA-bd_arm"/>
</dbReference>
<dbReference type="NCBIfam" id="TIGR00468">
    <property type="entry name" value="pheS"/>
    <property type="match status" value="1"/>
</dbReference>
<dbReference type="PANTHER" id="PTHR11538:SF41">
    <property type="entry name" value="PHENYLALANINE--TRNA LIGASE, MITOCHONDRIAL"/>
    <property type="match status" value="1"/>
</dbReference>
<dbReference type="PANTHER" id="PTHR11538">
    <property type="entry name" value="PHENYLALANYL-TRNA SYNTHETASE"/>
    <property type="match status" value="1"/>
</dbReference>
<dbReference type="Pfam" id="PF02912">
    <property type="entry name" value="Phe_tRNA-synt_N"/>
    <property type="match status" value="1"/>
</dbReference>
<dbReference type="Pfam" id="PF01409">
    <property type="entry name" value="tRNA-synt_2d"/>
    <property type="match status" value="1"/>
</dbReference>
<dbReference type="SUPFAM" id="SSF55681">
    <property type="entry name" value="Class II aaRS and biotin synthetases"/>
    <property type="match status" value="1"/>
</dbReference>
<dbReference type="SUPFAM" id="SSF46589">
    <property type="entry name" value="tRNA-binding arm"/>
    <property type="match status" value="1"/>
</dbReference>
<dbReference type="PROSITE" id="PS50862">
    <property type="entry name" value="AA_TRNA_LIGASE_II"/>
    <property type="match status" value="1"/>
</dbReference>
<keyword id="KW-0030">Aminoacyl-tRNA synthetase</keyword>
<keyword id="KW-0067">ATP-binding</keyword>
<keyword id="KW-0963">Cytoplasm</keyword>
<keyword id="KW-0436">Ligase</keyword>
<keyword id="KW-0460">Magnesium</keyword>
<keyword id="KW-0479">Metal-binding</keyword>
<keyword id="KW-0547">Nucleotide-binding</keyword>
<keyword id="KW-0648">Protein biosynthesis</keyword>
<evidence type="ECO:0000255" key="1">
    <source>
        <dbReference type="HAMAP-Rule" id="MF_00281"/>
    </source>
</evidence>